<sequence length="327" mass="35967">MIQTMSDTTEPTRHVSVLPVETLAALDPRAGGRYLDGTLGMGGHASAILSSAPGIELCGLDRDEEALALAGQRLSSFGGRAHLFHCRYSDFAEALNELGWDKVDGALLDIGVSSLQLDEAERGFSFYGDGPLDMRMDQNSAQPSAWHWVNRESFDKLKDCIATLGEEPQAGRIARAIVDARQKNTIDTTGQLAALVERAYPAAWRAKARRHPATRTFQALRMAVNDELGELRRFLDQILTWLPIGGRLAVITFHSLEDRMVKQAMRHWVEGCRCPRHIPRCICGHQPEVRILHKKPVQAGPEELAANSRAGSAKLRAVEKIAEDSGS</sequence>
<comment type="function">
    <text evidence="1">Specifically methylates the N4 position of cytidine in position 1402 (C1402) of 16S rRNA.</text>
</comment>
<comment type="catalytic activity">
    <reaction evidence="1">
        <text>cytidine(1402) in 16S rRNA + S-adenosyl-L-methionine = N(4)-methylcytidine(1402) in 16S rRNA + S-adenosyl-L-homocysteine + H(+)</text>
        <dbReference type="Rhea" id="RHEA:42928"/>
        <dbReference type="Rhea" id="RHEA-COMP:10286"/>
        <dbReference type="Rhea" id="RHEA-COMP:10287"/>
        <dbReference type="ChEBI" id="CHEBI:15378"/>
        <dbReference type="ChEBI" id="CHEBI:57856"/>
        <dbReference type="ChEBI" id="CHEBI:59789"/>
        <dbReference type="ChEBI" id="CHEBI:74506"/>
        <dbReference type="ChEBI" id="CHEBI:82748"/>
        <dbReference type="EC" id="2.1.1.199"/>
    </reaction>
</comment>
<comment type="subcellular location">
    <subcellularLocation>
        <location evidence="1">Cytoplasm</location>
    </subcellularLocation>
</comment>
<comment type="similarity">
    <text evidence="1">Belongs to the methyltransferase superfamily. RsmH family.</text>
</comment>
<evidence type="ECO:0000255" key="1">
    <source>
        <dbReference type="HAMAP-Rule" id="MF_01007"/>
    </source>
</evidence>
<protein>
    <recommendedName>
        <fullName evidence="1">Ribosomal RNA small subunit methyltransferase H</fullName>
        <ecNumber evidence="1">2.1.1.199</ecNumber>
    </recommendedName>
    <alternativeName>
        <fullName evidence="1">16S rRNA m(4)C1402 methyltransferase</fullName>
    </alternativeName>
    <alternativeName>
        <fullName evidence="1">rRNA (cytosine-N(4)-)-methyltransferase RsmH</fullName>
    </alternativeName>
</protein>
<organism>
    <name type="scientific">Desulfovibrio desulfuricans (strain ATCC 27774 / DSM 6949 / MB)</name>
    <dbReference type="NCBI Taxonomy" id="525146"/>
    <lineage>
        <taxon>Bacteria</taxon>
        <taxon>Pseudomonadati</taxon>
        <taxon>Thermodesulfobacteriota</taxon>
        <taxon>Desulfovibrionia</taxon>
        <taxon>Desulfovibrionales</taxon>
        <taxon>Desulfovibrionaceae</taxon>
        <taxon>Desulfovibrio</taxon>
    </lineage>
</organism>
<gene>
    <name evidence="1" type="primary">rsmH</name>
    <name type="synonym">mraW</name>
    <name type="ordered locus">Ddes_1105</name>
</gene>
<accession>B8IZT3</accession>
<name>RSMH_DESDA</name>
<reference key="1">
    <citation type="submission" date="2009-01" db="EMBL/GenBank/DDBJ databases">
        <title>Complete sequence of Desulfovibrio desulfuricans subsp. desulfuricans str. ATCC 27774.</title>
        <authorList>
            <consortium name="US DOE Joint Genome Institute"/>
            <person name="Lucas S."/>
            <person name="Copeland A."/>
            <person name="Lapidus A."/>
            <person name="Glavina del Rio T."/>
            <person name="Tice H."/>
            <person name="Bruce D."/>
            <person name="Goodwin L."/>
            <person name="Pitluck S."/>
            <person name="Sims D."/>
            <person name="Lu M."/>
            <person name="Kiss H."/>
            <person name="Meineke L."/>
            <person name="Brettin T."/>
            <person name="Detter J.C."/>
            <person name="Han C."/>
            <person name="Larimer F."/>
            <person name="Land M."/>
            <person name="Hauser L."/>
            <person name="Kyrpides N."/>
            <person name="Ovchinnikova G."/>
            <person name="Hazen T.C."/>
        </authorList>
    </citation>
    <scope>NUCLEOTIDE SEQUENCE [LARGE SCALE GENOMIC DNA]</scope>
    <source>
        <strain>ATCC 27774 / DSM 6949 / MB</strain>
    </source>
</reference>
<feature type="chain" id="PRO_0000386851" description="Ribosomal RNA small subunit methyltransferase H">
    <location>
        <begin position="1"/>
        <end position="327"/>
    </location>
</feature>
<feature type="binding site" evidence="1">
    <location>
        <begin position="42"/>
        <end position="44"/>
    </location>
    <ligand>
        <name>S-adenosyl-L-methionine</name>
        <dbReference type="ChEBI" id="CHEBI:59789"/>
    </ligand>
</feature>
<feature type="binding site" evidence="1">
    <location>
        <position position="61"/>
    </location>
    <ligand>
        <name>S-adenosyl-L-methionine</name>
        <dbReference type="ChEBI" id="CHEBI:59789"/>
    </ligand>
</feature>
<feature type="binding site" evidence="1">
    <location>
        <position position="95"/>
    </location>
    <ligand>
        <name>S-adenosyl-L-methionine</name>
        <dbReference type="ChEBI" id="CHEBI:59789"/>
    </ligand>
</feature>
<feature type="binding site" evidence="1">
    <location>
        <position position="109"/>
    </location>
    <ligand>
        <name>S-adenosyl-L-methionine</name>
        <dbReference type="ChEBI" id="CHEBI:59789"/>
    </ligand>
</feature>
<feature type="binding site" evidence="1">
    <location>
        <position position="116"/>
    </location>
    <ligand>
        <name>S-adenosyl-L-methionine</name>
        <dbReference type="ChEBI" id="CHEBI:59789"/>
    </ligand>
</feature>
<keyword id="KW-0963">Cytoplasm</keyword>
<keyword id="KW-0489">Methyltransferase</keyword>
<keyword id="KW-0698">rRNA processing</keyword>
<keyword id="KW-0949">S-adenosyl-L-methionine</keyword>
<keyword id="KW-0808">Transferase</keyword>
<dbReference type="EC" id="2.1.1.199" evidence="1"/>
<dbReference type="EMBL" id="CP001358">
    <property type="protein sequence ID" value="ACL49010.1"/>
    <property type="molecule type" value="Genomic_DNA"/>
</dbReference>
<dbReference type="SMR" id="B8IZT3"/>
<dbReference type="STRING" id="525146.Ddes_1105"/>
<dbReference type="KEGG" id="dds:Ddes_1105"/>
<dbReference type="eggNOG" id="COG0275">
    <property type="taxonomic scope" value="Bacteria"/>
</dbReference>
<dbReference type="HOGENOM" id="CLU_038422_3_0_7"/>
<dbReference type="GO" id="GO:0005737">
    <property type="term" value="C:cytoplasm"/>
    <property type="evidence" value="ECO:0007669"/>
    <property type="project" value="UniProtKB-SubCell"/>
</dbReference>
<dbReference type="GO" id="GO:0071424">
    <property type="term" value="F:rRNA (cytosine-N4-)-methyltransferase activity"/>
    <property type="evidence" value="ECO:0007669"/>
    <property type="project" value="UniProtKB-UniRule"/>
</dbReference>
<dbReference type="GO" id="GO:0070475">
    <property type="term" value="P:rRNA base methylation"/>
    <property type="evidence" value="ECO:0007669"/>
    <property type="project" value="UniProtKB-UniRule"/>
</dbReference>
<dbReference type="Gene3D" id="1.10.150.170">
    <property type="entry name" value="Putative methyltransferase TM0872, insert domain"/>
    <property type="match status" value="1"/>
</dbReference>
<dbReference type="Gene3D" id="3.40.50.150">
    <property type="entry name" value="Vaccinia Virus protein VP39"/>
    <property type="match status" value="1"/>
</dbReference>
<dbReference type="HAMAP" id="MF_01007">
    <property type="entry name" value="16SrRNA_methyltr_H"/>
    <property type="match status" value="1"/>
</dbReference>
<dbReference type="InterPro" id="IPR002903">
    <property type="entry name" value="RsmH"/>
</dbReference>
<dbReference type="InterPro" id="IPR023397">
    <property type="entry name" value="SAM-dep_MeTrfase_MraW_recog"/>
</dbReference>
<dbReference type="InterPro" id="IPR029063">
    <property type="entry name" value="SAM-dependent_MTases_sf"/>
</dbReference>
<dbReference type="NCBIfam" id="TIGR00006">
    <property type="entry name" value="16S rRNA (cytosine(1402)-N(4))-methyltransferase RsmH"/>
    <property type="match status" value="1"/>
</dbReference>
<dbReference type="PANTHER" id="PTHR11265:SF0">
    <property type="entry name" value="12S RRNA N4-METHYLCYTIDINE METHYLTRANSFERASE"/>
    <property type="match status" value="1"/>
</dbReference>
<dbReference type="PANTHER" id="PTHR11265">
    <property type="entry name" value="S-ADENOSYL-METHYLTRANSFERASE MRAW"/>
    <property type="match status" value="1"/>
</dbReference>
<dbReference type="Pfam" id="PF01795">
    <property type="entry name" value="Methyltransf_5"/>
    <property type="match status" value="1"/>
</dbReference>
<dbReference type="PIRSF" id="PIRSF004486">
    <property type="entry name" value="MraW"/>
    <property type="match status" value="1"/>
</dbReference>
<dbReference type="SUPFAM" id="SSF81799">
    <property type="entry name" value="Putative methyltransferase TM0872, insert domain"/>
    <property type="match status" value="1"/>
</dbReference>
<dbReference type="SUPFAM" id="SSF53335">
    <property type="entry name" value="S-adenosyl-L-methionine-dependent methyltransferases"/>
    <property type="match status" value="1"/>
</dbReference>
<proteinExistence type="inferred from homology"/>